<name>TSN10_HUMAN</name>
<feature type="chain" id="PRO_0000219255" description="Tetraspanin-10">
    <location>
        <begin position="1"/>
        <end position="355"/>
    </location>
</feature>
<feature type="topological domain" description="Cytoplasmic" evidence="7">
    <location>
        <begin position="1"/>
        <end position="78"/>
    </location>
</feature>
<feature type="transmembrane region" description="Helical" evidence="3">
    <location>
        <begin position="79"/>
        <end position="99"/>
    </location>
</feature>
<feature type="topological domain" description="Extracellular" evidence="7">
    <location>
        <begin position="100"/>
        <end position="120"/>
    </location>
</feature>
<feature type="transmembrane region" description="Helical" evidence="3">
    <location>
        <begin position="121"/>
        <end position="141"/>
    </location>
</feature>
<feature type="topological domain" description="Cytoplasmic" evidence="7">
    <location>
        <begin position="142"/>
        <end position="154"/>
    </location>
</feature>
<feature type="transmembrane region" description="Helical" evidence="3">
    <location>
        <begin position="155"/>
        <end position="175"/>
    </location>
</feature>
<feature type="topological domain" description="Extracellular" evidence="7">
    <location>
        <begin position="176"/>
        <end position="355"/>
    </location>
</feature>
<feature type="region of interest" description="Disordered" evidence="4">
    <location>
        <begin position="1"/>
        <end position="33"/>
    </location>
</feature>
<feature type="region of interest" description="Disordered" evidence="4">
    <location>
        <begin position="327"/>
        <end position="355"/>
    </location>
</feature>
<feature type="compositionally biased region" description="Pro residues" evidence="4">
    <location>
        <begin position="341"/>
        <end position="355"/>
    </location>
</feature>
<feature type="glycosylation site" description="N-linked (GlcNAc...) asparagine" evidence="3">
    <location>
        <position position="228"/>
    </location>
</feature>
<feature type="disulfide bond" evidence="1">
    <location>
        <begin position="212"/>
        <end position="279"/>
    </location>
</feature>
<feature type="disulfide bond" evidence="1">
    <location>
        <begin position="213"/>
        <end position="243"/>
    </location>
</feature>
<feature type="disulfide bond" evidence="1">
    <location>
        <begin position="229"/>
        <end position="237"/>
    </location>
</feature>
<feature type="disulfide bond" evidence="1">
    <location>
        <begin position="244"/>
        <end position="258"/>
    </location>
</feature>
<feature type="sequence variant" id="VAR_057277" description="In dbSNP:rs34896443.">
    <original>R</original>
    <variation>H</variation>
    <location>
        <position position="187"/>
    </location>
</feature>
<feature type="sequence variant" id="VAR_061849" description="In dbSNP:rs34379910.">
    <original>Y</original>
    <variation>H</variation>
    <location>
        <position position="218"/>
    </location>
</feature>
<feature type="sequence conflict" description="In Ref. 2; AAH32802." evidence="7" ref="2">
    <original>H</original>
    <variation>R</variation>
    <location>
        <position position="332"/>
    </location>
</feature>
<accession>Q9H1Z9</accession>
<accession>Q8N548</accession>
<sequence length="355" mass="36498">MEEGERSPLLSQETAGQKPLSVHRPPTSGCLGPVPREDQAEAWGCSCCPPETKHQALSGTPKKGPAPSLSPGSSCVKYLIFLSNFPFSLLGLLALAIGLWGLAVKGSLGSDLGGPLPTDPMLGLALGGLVVSAASLAGCLGALCENTCLLRGFSGGILAFLVLEAVAGALVVALWGPLQDSLEHTLRVAIAHYQDDPDLRFLLDQVQLGLRCCGAASYQDWQQNLYFNCSSPGVQACSLPASCCIDPREDGASVNDQCGFGVLRLDADAAQRVVYLEGCGPPLRRWLRANLAASGGYAIAVVLLQGAELLLAARLLGALAARSGAAYGPGAHGEDRAGPQSPSPGAPPAAKPARG</sequence>
<reference key="1">
    <citation type="journal article" date="2002" name="Mol. Vis.">
        <title>Expressed sequence tag analysis of human RPE/choroid for the NEIBank project: over 6000 non-redundant transcripts, novel genes and splice variants.</title>
        <authorList>
            <person name="Wistow G."/>
            <person name="Bernstein S.L."/>
            <person name="Wyatt M.K."/>
            <person name="Fariss R.N."/>
            <person name="Behal A."/>
            <person name="Touchman J.W."/>
            <person name="Bouffard G."/>
            <person name="Smith D."/>
            <person name="Peterson K."/>
        </authorList>
    </citation>
    <scope>NUCLEOTIDE SEQUENCE [MRNA]</scope>
    <scope>TISSUE SPECIFICITY</scope>
    <source>
        <tissue>Eye</tissue>
    </source>
</reference>
<reference key="2">
    <citation type="journal article" date="2004" name="Genome Res.">
        <title>The status, quality, and expansion of the NIH full-length cDNA project: the Mammalian Gene Collection (MGC).</title>
        <authorList>
            <consortium name="The MGC Project Team"/>
        </authorList>
    </citation>
    <scope>NUCLEOTIDE SEQUENCE [LARGE SCALE MRNA]</scope>
    <source>
        <tissue>Brain</tissue>
    </source>
</reference>
<reference key="3">
    <citation type="journal article" date="2023" name="Cell">
        <title>Structural basis for membrane-proximal proteolysis of substrates by ADAM10.</title>
        <authorList>
            <person name="Lipper C.H."/>
            <person name="Egan E.D."/>
            <person name="Gabriel K.H."/>
            <person name="Blacklow S.C."/>
        </authorList>
    </citation>
    <scope>FUNCTION</scope>
</reference>
<keyword id="KW-1003">Cell membrane</keyword>
<keyword id="KW-1015">Disulfide bond</keyword>
<keyword id="KW-0325">Glycoprotein</keyword>
<keyword id="KW-0472">Membrane</keyword>
<keyword id="KW-1267">Proteomics identification</keyword>
<keyword id="KW-1185">Reference proteome</keyword>
<keyword id="KW-0812">Transmembrane</keyword>
<keyword id="KW-1133">Transmembrane helix</keyword>
<organism>
    <name type="scientific">Homo sapiens</name>
    <name type="common">Human</name>
    <dbReference type="NCBI Taxonomy" id="9606"/>
    <lineage>
        <taxon>Eukaryota</taxon>
        <taxon>Metazoa</taxon>
        <taxon>Chordata</taxon>
        <taxon>Craniata</taxon>
        <taxon>Vertebrata</taxon>
        <taxon>Euteleostomi</taxon>
        <taxon>Mammalia</taxon>
        <taxon>Eutheria</taxon>
        <taxon>Euarchontoglires</taxon>
        <taxon>Primates</taxon>
        <taxon>Haplorrhini</taxon>
        <taxon>Catarrhini</taxon>
        <taxon>Hominidae</taxon>
        <taxon>Homo</taxon>
    </lineage>
</organism>
<proteinExistence type="evidence at protein level"/>
<dbReference type="EMBL" id="AF325213">
    <property type="protein sequence ID" value="AAG42857.1"/>
    <property type="molecule type" value="mRNA"/>
</dbReference>
<dbReference type="EMBL" id="BC032802">
    <property type="protein sequence ID" value="AAH32802.1"/>
    <property type="molecule type" value="mRNA"/>
</dbReference>
<dbReference type="CCDS" id="CCDS58608.1"/>
<dbReference type="RefSeq" id="NP_001277141.1">
    <property type="nucleotide sequence ID" value="NM_001290212.1"/>
</dbReference>
<dbReference type="RefSeq" id="NP_114151.3">
    <property type="nucleotide sequence ID" value="NM_031945.4"/>
</dbReference>
<dbReference type="SMR" id="Q9H1Z9"/>
<dbReference type="BioGRID" id="123795">
    <property type="interactions" value="132"/>
</dbReference>
<dbReference type="FunCoup" id="Q9H1Z9">
    <property type="interactions" value="133"/>
</dbReference>
<dbReference type="IntAct" id="Q9H1Z9">
    <property type="interactions" value="55"/>
</dbReference>
<dbReference type="MINT" id="Q9H1Z9"/>
<dbReference type="STRING" id="9606.ENSP00000480492"/>
<dbReference type="TCDB" id="8.A.40.1.10">
    <property type="family name" value="the tetraspanin (tetraspanin) family"/>
</dbReference>
<dbReference type="GlyCosmos" id="Q9H1Z9">
    <property type="glycosylation" value="1 site, No reported glycans"/>
</dbReference>
<dbReference type="GlyGen" id="Q9H1Z9">
    <property type="glycosylation" value="1 site"/>
</dbReference>
<dbReference type="iPTMnet" id="Q9H1Z9"/>
<dbReference type="PhosphoSitePlus" id="Q9H1Z9"/>
<dbReference type="SwissPalm" id="Q9H1Z9"/>
<dbReference type="BioMuta" id="TSPAN10"/>
<dbReference type="DMDM" id="34222702"/>
<dbReference type="jPOST" id="Q9H1Z9"/>
<dbReference type="MassIVE" id="Q9H1Z9"/>
<dbReference type="PaxDb" id="9606-ENSP00000480492"/>
<dbReference type="PeptideAtlas" id="Q9H1Z9"/>
<dbReference type="ProteomicsDB" id="80462"/>
<dbReference type="DNASU" id="83882"/>
<dbReference type="GeneID" id="83882"/>
<dbReference type="KEGG" id="hsa:83882"/>
<dbReference type="AGR" id="HGNC:29942"/>
<dbReference type="CTD" id="83882"/>
<dbReference type="DisGeNET" id="83882"/>
<dbReference type="GeneCards" id="TSPAN10"/>
<dbReference type="HGNC" id="HGNC:29942">
    <property type="gene designation" value="TSPAN10"/>
</dbReference>
<dbReference type="neXtProt" id="NX_Q9H1Z9"/>
<dbReference type="PharmGKB" id="PA142670686"/>
<dbReference type="eggNOG" id="KOG3882">
    <property type="taxonomic scope" value="Eukaryota"/>
</dbReference>
<dbReference type="InParanoid" id="Q9H1Z9"/>
<dbReference type="OrthoDB" id="8122038at2759"/>
<dbReference type="PAN-GO" id="Q9H1Z9">
    <property type="GO annotations" value="1 GO annotation based on evolutionary models"/>
</dbReference>
<dbReference type="PhylomeDB" id="Q9H1Z9"/>
<dbReference type="PathwayCommons" id="Q9H1Z9"/>
<dbReference type="SignaLink" id="Q9H1Z9"/>
<dbReference type="BioGRID-ORCS" id="83882">
    <property type="hits" value="10 hits in 246 CRISPR screens"/>
</dbReference>
<dbReference type="GenomeRNAi" id="83882"/>
<dbReference type="Pharos" id="Q9H1Z9">
    <property type="development level" value="Tdark"/>
</dbReference>
<dbReference type="PRO" id="PR:Q9H1Z9"/>
<dbReference type="Proteomes" id="UP000005640">
    <property type="component" value="Unplaced"/>
</dbReference>
<dbReference type="RNAct" id="Q9H1Z9">
    <property type="molecule type" value="protein"/>
</dbReference>
<dbReference type="GO" id="GO:0005886">
    <property type="term" value="C:plasma membrane"/>
    <property type="evidence" value="ECO:0000318"/>
    <property type="project" value="GO_Central"/>
</dbReference>
<dbReference type="GO" id="GO:0019899">
    <property type="term" value="F:enzyme binding"/>
    <property type="evidence" value="ECO:0000353"/>
    <property type="project" value="UniProtKB"/>
</dbReference>
<dbReference type="GO" id="GO:0072594">
    <property type="term" value="P:establishment of protein localization to organelle"/>
    <property type="evidence" value="ECO:0000314"/>
    <property type="project" value="UniProtKB"/>
</dbReference>
<dbReference type="CDD" id="cd03167">
    <property type="entry name" value="oculospanin_like_LEL"/>
    <property type="match status" value="1"/>
</dbReference>
<dbReference type="FunFam" id="1.10.1450.10:FF:000033">
    <property type="entry name" value="Tetraspanin"/>
    <property type="match status" value="1"/>
</dbReference>
<dbReference type="Gene3D" id="1.10.1450.10">
    <property type="entry name" value="Tetraspanin"/>
    <property type="match status" value="1"/>
</dbReference>
<dbReference type="InterPro" id="IPR018499">
    <property type="entry name" value="Tetraspanin/Peripherin"/>
</dbReference>
<dbReference type="InterPro" id="IPR018503">
    <property type="entry name" value="Tetraspanin_CS"/>
</dbReference>
<dbReference type="InterPro" id="IPR008952">
    <property type="entry name" value="Tetraspanin_EC2_sf"/>
</dbReference>
<dbReference type="PANTHER" id="PTHR19282">
    <property type="entry name" value="TETRASPANIN"/>
    <property type="match status" value="1"/>
</dbReference>
<dbReference type="PANTHER" id="PTHR19282:SF550">
    <property type="entry name" value="TETRASPANIN-10"/>
    <property type="match status" value="1"/>
</dbReference>
<dbReference type="Pfam" id="PF00335">
    <property type="entry name" value="Tetraspanin"/>
    <property type="match status" value="1"/>
</dbReference>
<dbReference type="PRINTS" id="PR00259">
    <property type="entry name" value="TMFOUR"/>
</dbReference>
<dbReference type="SUPFAM" id="SSF48652">
    <property type="entry name" value="Tetraspanin"/>
    <property type="match status" value="1"/>
</dbReference>
<dbReference type="PROSITE" id="PS00421">
    <property type="entry name" value="TM4_1"/>
    <property type="match status" value="1"/>
</dbReference>
<evidence type="ECO:0000250" key="1">
    <source>
        <dbReference type="UniProtKB" id="O95858"/>
    </source>
</evidence>
<evidence type="ECO:0000250" key="2">
    <source>
        <dbReference type="UniProtKB" id="Q8VCF5"/>
    </source>
</evidence>
<evidence type="ECO:0000255" key="3"/>
<evidence type="ECO:0000256" key="4">
    <source>
        <dbReference type="SAM" id="MobiDB-lite"/>
    </source>
</evidence>
<evidence type="ECO:0000269" key="5">
    <source>
    </source>
</evidence>
<evidence type="ECO:0000269" key="6">
    <source>
    </source>
</evidence>
<evidence type="ECO:0000305" key="7"/>
<evidence type="ECO:0000312" key="8">
    <source>
        <dbReference type="HGNC" id="HGNC:29942"/>
    </source>
</evidence>
<gene>
    <name evidence="8" type="primary">TSPAN10</name>
    <name type="synonym">OCSP</name>
</gene>
<protein>
    <recommendedName>
        <fullName>Tetraspanin-10</fullName>
        <shortName>Tspan-10</shortName>
    </recommendedName>
    <alternativeName>
        <fullName>Oculospanin</fullName>
    </alternativeName>
</protein>
<comment type="function">
    <text evidence="6">Part of TspanC8 subgroup, composed of 6 members that interact with the transmembrane metalloprotease ADAM10. This interaction is required for ADAM10 exit from the endoplasmic reticulum and for enzymatic maturation and trafficking to the cell surface as well as substrate specificity. Different TspanC8/ADAM10 complexes have distinct substrates.</text>
</comment>
<comment type="subunit">
    <text evidence="2">Interacts with ADAM10.</text>
</comment>
<comment type="interaction">
    <interactant intactId="EBI-7902865">
        <id>Q9H1Z9</id>
    </interactant>
    <interactant intactId="EBI-18053395">
        <id>Q7Z5P4</id>
        <label>HSD17B13</label>
    </interactant>
    <organismsDiffer>false</organismsDiffer>
    <experiments>2</experiments>
</comment>
<comment type="subcellular location">
    <subcellularLocation>
        <location evidence="2">Cell membrane</location>
        <topology evidence="2">Multi-pass membrane protein</topology>
    </subcellularLocation>
</comment>
<comment type="tissue specificity">
    <text evidence="5">Expressed in the eye, including iris, ciliary body, retinal pigment epithelium, but not lens (protein level).</text>
</comment>
<comment type="similarity">
    <text evidence="7">Belongs to the tetraspanin (TM4SF) family.</text>
</comment>